<accession>C0NTV7</accession>
<reference key="1">
    <citation type="submission" date="2009-02" db="EMBL/GenBank/DDBJ databases">
        <title>The genome sequence of Ajellomyces capsulatus strain G186AR.</title>
        <authorList>
            <person name="Champion M."/>
            <person name="Cuomo C.A."/>
            <person name="Ma L.-J."/>
            <person name="Henn M.R."/>
            <person name="Sil A."/>
            <person name="Goldman B."/>
            <person name="Young S.K."/>
            <person name="Kodira C.D."/>
            <person name="Zeng Q."/>
            <person name="Koehrsen M."/>
            <person name="Alvarado L."/>
            <person name="Berlin A."/>
            <person name="Borenstein D."/>
            <person name="Chen Z."/>
            <person name="Engels R."/>
            <person name="Freedman E."/>
            <person name="Gellesch M."/>
            <person name="Goldberg J."/>
            <person name="Griggs A."/>
            <person name="Gujja S."/>
            <person name="Heiman D."/>
            <person name="Hepburn T."/>
            <person name="Howarth C."/>
            <person name="Jen D."/>
            <person name="Larson L."/>
            <person name="Lewis B."/>
            <person name="Mehta T."/>
            <person name="Park D."/>
            <person name="Pearson M."/>
            <person name="Roberts A."/>
            <person name="Saif S."/>
            <person name="Shea T."/>
            <person name="Shenoy N."/>
            <person name="Sisk P."/>
            <person name="Stolte C."/>
            <person name="Sykes S."/>
            <person name="Walk T."/>
            <person name="White J."/>
            <person name="Yandava C."/>
            <person name="Klein B."/>
            <person name="McEwen J.G."/>
            <person name="Puccia R."/>
            <person name="Goldman G.H."/>
            <person name="Felipe M.S."/>
            <person name="Nino-Vega G."/>
            <person name="San-Blas G."/>
            <person name="Taylor J."/>
            <person name="Mendoza L."/>
            <person name="Galagan J.E."/>
            <person name="Nusbaum C."/>
            <person name="Birren B.W."/>
        </authorList>
    </citation>
    <scope>NUCLEOTIDE SEQUENCE [LARGE SCALE GENOMIC DNA]</scope>
    <source>
        <strain>G186AR / H82 / ATCC MYA-2454 / RMSCC 2432</strain>
    </source>
</reference>
<evidence type="ECO:0000250" key="1"/>
<evidence type="ECO:0000255" key="2"/>
<evidence type="ECO:0000305" key="3"/>
<keyword id="KW-1185">Reference proteome</keyword>
<keyword id="KW-0732">Signal</keyword>
<feature type="signal peptide" evidence="2">
    <location>
        <begin position="1"/>
        <end position="21"/>
    </location>
</feature>
<feature type="chain" id="PRO_0000408583" description="Long chronological lifespan protein 2">
    <location>
        <begin position="22"/>
        <end position="123"/>
    </location>
</feature>
<protein>
    <recommendedName>
        <fullName>Long chronological lifespan protein 2</fullName>
    </recommendedName>
</protein>
<sequence>MVHIFTSILLGLLLLATGTRAQFQFFEQMFGGGQQQQQHDSREQNVPSDSDWYQRTYDNARCSNYLCPGTLACVAVPHHCPCQHPAVEDKFELGDGSAICVSKGGFKFGEAARKVELARKGLL</sequence>
<gene>
    <name type="primary">LCL2</name>
    <name type="ORF">HCBG_06587</name>
</gene>
<name>LCL2_AJECG</name>
<dbReference type="EMBL" id="GG663371">
    <property type="protein sequence ID" value="EEH05468.1"/>
    <property type="molecule type" value="Genomic_DNA"/>
</dbReference>
<dbReference type="SMR" id="C0NTV7"/>
<dbReference type="STRING" id="447093.C0NTV7"/>
<dbReference type="VEuPathDB" id="FungiDB:I7I50_05470"/>
<dbReference type="HOGENOM" id="CLU_142363_0_0_1"/>
<dbReference type="InParanoid" id="C0NTV7"/>
<dbReference type="Proteomes" id="UP000001631">
    <property type="component" value="Unassembled WGS sequence"/>
</dbReference>
<dbReference type="GO" id="GO:0036503">
    <property type="term" value="P:ERAD pathway"/>
    <property type="evidence" value="ECO:0007669"/>
    <property type="project" value="TreeGrafter"/>
</dbReference>
<dbReference type="CDD" id="cd23996">
    <property type="entry name" value="LCL2-like"/>
    <property type="match status" value="1"/>
</dbReference>
<dbReference type="InterPro" id="IPR034543">
    <property type="entry name" value="LCL2"/>
</dbReference>
<dbReference type="PANTHER" id="PTHR38425">
    <property type="entry name" value="LONG CHRONOLOGICAL LIFESPAN PROTEIN 2"/>
    <property type="match status" value="1"/>
</dbReference>
<dbReference type="PANTHER" id="PTHR38425:SF1">
    <property type="entry name" value="LONG CHRONOLOGICAL LIFESPAN PROTEIN 2"/>
    <property type="match status" value="1"/>
</dbReference>
<organism>
    <name type="scientific">Ajellomyces capsulatus (strain G186AR / H82 / ATCC MYA-2454 / RMSCC 2432)</name>
    <name type="common">Darling's disease fungus</name>
    <name type="synonym">Histoplasma capsulatum</name>
    <dbReference type="NCBI Taxonomy" id="447093"/>
    <lineage>
        <taxon>Eukaryota</taxon>
        <taxon>Fungi</taxon>
        <taxon>Dikarya</taxon>
        <taxon>Ascomycota</taxon>
        <taxon>Pezizomycotina</taxon>
        <taxon>Eurotiomycetes</taxon>
        <taxon>Eurotiomycetidae</taxon>
        <taxon>Onygenales</taxon>
        <taxon>Ajellomycetaceae</taxon>
        <taxon>Histoplasma</taxon>
    </lineage>
</organism>
<comment type="function">
    <text evidence="1">Probable component of the endoplasmic reticulum-associated degradation (ERAD) pathway.</text>
</comment>
<comment type="similarity">
    <text evidence="3">Belongs to the LCL2 family.</text>
</comment>
<proteinExistence type="inferred from homology"/>